<dbReference type="EC" id="6.1.1.6" evidence="1"/>
<dbReference type="EMBL" id="CP001635">
    <property type="protein sequence ID" value="ACS18061.1"/>
    <property type="molecule type" value="Genomic_DNA"/>
</dbReference>
<dbReference type="SMR" id="C5CSG3"/>
<dbReference type="STRING" id="543728.Vapar_1410"/>
<dbReference type="KEGG" id="vap:Vapar_1410"/>
<dbReference type="eggNOG" id="COG1190">
    <property type="taxonomic scope" value="Bacteria"/>
</dbReference>
<dbReference type="HOGENOM" id="CLU_008255_6_0_4"/>
<dbReference type="OrthoDB" id="9802326at2"/>
<dbReference type="GO" id="GO:0005829">
    <property type="term" value="C:cytosol"/>
    <property type="evidence" value="ECO:0007669"/>
    <property type="project" value="TreeGrafter"/>
</dbReference>
<dbReference type="GO" id="GO:0005524">
    <property type="term" value="F:ATP binding"/>
    <property type="evidence" value="ECO:0007669"/>
    <property type="project" value="UniProtKB-UniRule"/>
</dbReference>
<dbReference type="GO" id="GO:0004824">
    <property type="term" value="F:lysine-tRNA ligase activity"/>
    <property type="evidence" value="ECO:0007669"/>
    <property type="project" value="UniProtKB-UniRule"/>
</dbReference>
<dbReference type="GO" id="GO:0000287">
    <property type="term" value="F:magnesium ion binding"/>
    <property type="evidence" value="ECO:0007669"/>
    <property type="project" value="UniProtKB-UniRule"/>
</dbReference>
<dbReference type="GO" id="GO:0000049">
    <property type="term" value="F:tRNA binding"/>
    <property type="evidence" value="ECO:0007669"/>
    <property type="project" value="TreeGrafter"/>
</dbReference>
<dbReference type="GO" id="GO:0006430">
    <property type="term" value="P:lysyl-tRNA aminoacylation"/>
    <property type="evidence" value="ECO:0007669"/>
    <property type="project" value="UniProtKB-UniRule"/>
</dbReference>
<dbReference type="CDD" id="cd00775">
    <property type="entry name" value="LysRS_core"/>
    <property type="match status" value="1"/>
</dbReference>
<dbReference type="CDD" id="cd04322">
    <property type="entry name" value="LysRS_N"/>
    <property type="match status" value="1"/>
</dbReference>
<dbReference type="FunFam" id="2.40.50.140:FF:000024">
    <property type="entry name" value="Lysine--tRNA ligase"/>
    <property type="match status" value="1"/>
</dbReference>
<dbReference type="FunFam" id="3.30.930.10:FF:000001">
    <property type="entry name" value="Lysine--tRNA ligase"/>
    <property type="match status" value="1"/>
</dbReference>
<dbReference type="Gene3D" id="3.30.930.10">
    <property type="entry name" value="Bira Bifunctional Protein, Domain 2"/>
    <property type="match status" value="1"/>
</dbReference>
<dbReference type="Gene3D" id="2.40.50.140">
    <property type="entry name" value="Nucleic acid-binding proteins"/>
    <property type="match status" value="1"/>
</dbReference>
<dbReference type="HAMAP" id="MF_00252">
    <property type="entry name" value="Lys_tRNA_synth_class2"/>
    <property type="match status" value="1"/>
</dbReference>
<dbReference type="InterPro" id="IPR004364">
    <property type="entry name" value="Aa-tRNA-synt_II"/>
</dbReference>
<dbReference type="InterPro" id="IPR006195">
    <property type="entry name" value="aa-tRNA-synth_II"/>
</dbReference>
<dbReference type="InterPro" id="IPR045864">
    <property type="entry name" value="aa-tRNA-synth_II/BPL/LPL"/>
</dbReference>
<dbReference type="InterPro" id="IPR002313">
    <property type="entry name" value="Lys-tRNA-ligase_II"/>
</dbReference>
<dbReference type="InterPro" id="IPR044136">
    <property type="entry name" value="Lys-tRNA-ligase_II_N"/>
</dbReference>
<dbReference type="InterPro" id="IPR018149">
    <property type="entry name" value="Lys-tRNA-synth_II_C"/>
</dbReference>
<dbReference type="InterPro" id="IPR012340">
    <property type="entry name" value="NA-bd_OB-fold"/>
</dbReference>
<dbReference type="InterPro" id="IPR004365">
    <property type="entry name" value="NA-bd_OB_tRNA"/>
</dbReference>
<dbReference type="NCBIfam" id="TIGR00499">
    <property type="entry name" value="lysS_bact"/>
    <property type="match status" value="1"/>
</dbReference>
<dbReference type="NCBIfam" id="NF001756">
    <property type="entry name" value="PRK00484.1"/>
    <property type="match status" value="1"/>
</dbReference>
<dbReference type="PANTHER" id="PTHR42918:SF15">
    <property type="entry name" value="LYSINE--TRNA LIGASE, CHLOROPLASTIC_MITOCHONDRIAL"/>
    <property type="match status" value="1"/>
</dbReference>
<dbReference type="PANTHER" id="PTHR42918">
    <property type="entry name" value="LYSYL-TRNA SYNTHETASE"/>
    <property type="match status" value="1"/>
</dbReference>
<dbReference type="Pfam" id="PF00152">
    <property type="entry name" value="tRNA-synt_2"/>
    <property type="match status" value="1"/>
</dbReference>
<dbReference type="Pfam" id="PF01336">
    <property type="entry name" value="tRNA_anti-codon"/>
    <property type="match status" value="1"/>
</dbReference>
<dbReference type="PRINTS" id="PR00982">
    <property type="entry name" value="TRNASYNTHLYS"/>
</dbReference>
<dbReference type="SUPFAM" id="SSF55681">
    <property type="entry name" value="Class II aaRS and biotin synthetases"/>
    <property type="match status" value="1"/>
</dbReference>
<dbReference type="SUPFAM" id="SSF50249">
    <property type="entry name" value="Nucleic acid-binding proteins"/>
    <property type="match status" value="1"/>
</dbReference>
<dbReference type="PROSITE" id="PS50862">
    <property type="entry name" value="AA_TRNA_LIGASE_II"/>
    <property type="match status" value="1"/>
</dbReference>
<proteinExistence type="inferred from homology"/>
<sequence length="520" mass="58363">MSDHLIPSIPTPAAAPAAAPAVDDNQLIAERREKLKLMRAAQAEGKGVAFPNDFKPGHRAAALIEAHGAADAEALEAQAVAVSVAGRMMLKRVMGKASFATVQDATSRIQLYVTRDAIGEEAYAEFKRWDLGDIVGAEGTLMKTKTGELSVKVTKLRLLTKSLRPLPDKFHGMADQEQKYRQRYVDLITDETARVRFTARSKAVSALREFMVGHGFLEVETPMLHPIPGGANAKPFKTHHNALDQEMFLRIAPELYLKRLIVGGFERVFEINRSYRNEGISVRHNPEFTMMEFYAAYWNYRDLMDFTETLIRTIADKAVGTQQLTYQGKPVDLTQPFERLTIREAILKYTEAGTGVDDSAWLINALRKIGLSEEKDKLSQRSLASLQVMYFEETVEEKLWQPTFIMEHPTEISPLARANDERPEVTERFELYITGREFGNGFSELNDAEDQAARFNAQVAAKDSGDDEAMFYDHDFVRALEYGMPPTGGCGIGIDRLMMLLTDSPSIRDVILFPALRRES</sequence>
<organism>
    <name type="scientific">Variovorax paradoxus (strain S110)</name>
    <dbReference type="NCBI Taxonomy" id="543728"/>
    <lineage>
        <taxon>Bacteria</taxon>
        <taxon>Pseudomonadati</taxon>
        <taxon>Pseudomonadota</taxon>
        <taxon>Betaproteobacteria</taxon>
        <taxon>Burkholderiales</taxon>
        <taxon>Comamonadaceae</taxon>
        <taxon>Variovorax</taxon>
    </lineage>
</organism>
<protein>
    <recommendedName>
        <fullName evidence="1">Lysine--tRNA ligase</fullName>
        <ecNumber evidence="1">6.1.1.6</ecNumber>
    </recommendedName>
    <alternativeName>
        <fullName evidence="1">Lysyl-tRNA synthetase</fullName>
        <shortName evidence="1">LysRS</shortName>
    </alternativeName>
</protein>
<comment type="catalytic activity">
    <reaction evidence="1">
        <text>tRNA(Lys) + L-lysine + ATP = L-lysyl-tRNA(Lys) + AMP + diphosphate</text>
        <dbReference type="Rhea" id="RHEA:20792"/>
        <dbReference type="Rhea" id="RHEA-COMP:9696"/>
        <dbReference type="Rhea" id="RHEA-COMP:9697"/>
        <dbReference type="ChEBI" id="CHEBI:30616"/>
        <dbReference type="ChEBI" id="CHEBI:32551"/>
        <dbReference type="ChEBI" id="CHEBI:33019"/>
        <dbReference type="ChEBI" id="CHEBI:78442"/>
        <dbReference type="ChEBI" id="CHEBI:78529"/>
        <dbReference type="ChEBI" id="CHEBI:456215"/>
        <dbReference type="EC" id="6.1.1.6"/>
    </reaction>
</comment>
<comment type="cofactor">
    <cofactor evidence="1">
        <name>Mg(2+)</name>
        <dbReference type="ChEBI" id="CHEBI:18420"/>
    </cofactor>
    <text evidence="1">Binds 3 Mg(2+) ions per subunit.</text>
</comment>
<comment type="subunit">
    <text evidence="1">Homodimer.</text>
</comment>
<comment type="subcellular location">
    <subcellularLocation>
        <location evidence="1">Cytoplasm</location>
    </subcellularLocation>
</comment>
<comment type="similarity">
    <text evidence="1">Belongs to the class-II aminoacyl-tRNA synthetase family.</text>
</comment>
<feature type="chain" id="PRO_1000204578" description="Lysine--tRNA ligase">
    <location>
        <begin position="1"/>
        <end position="520"/>
    </location>
</feature>
<feature type="region of interest" description="Disordered" evidence="2">
    <location>
        <begin position="1"/>
        <end position="21"/>
    </location>
</feature>
<feature type="compositionally biased region" description="Low complexity" evidence="2">
    <location>
        <begin position="12"/>
        <end position="21"/>
    </location>
</feature>
<feature type="binding site" evidence="1">
    <location>
        <position position="430"/>
    </location>
    <ligand>
        <name>Mg(2+)</name>
        <dbReference type="ChEBI" id="CHEBI:18420"/>
        <label>1</label>
    </ligand>
</feature>
<feature type="binding site" evidence="1">
    <location>
        <position position="437"/>
    </location>
    <ligand>
        <name>Mg(2+)</name>
        <dbReference type="ChEBI" id="CHEBI:18420"/>
        <label>1</label>
    </ligand>
</feature>
<feature type="binding site" evidence="1">
    <location>
        <position position="437"/>
    </location>
    <ligand>
        <name>Mg(2+)</name>
        <dbReference type="ChEBI" id="CHEBI:18420"/>
        <label>2</label>
    </ligand>
</feature>
<name>SYK_VARPS</name>
<reference key="1">
    <citation type="journal article" date="2011" name="J. Bacteriol.">
        <title>Complete genome sequence of the metabolically versatile plant growth-promoting endophyte, Variovorax paradoxus S110.</title>
        <authorList>
            <person name="Han J.I."/>
            <person name="Choi H.K."/>
            <person name="Lee S.W."/>
            <person name="Orwin P.M."/>
            <person name="Kim J."/>
            <person name="Laroe S.L."/>
            <person name="Kim T.G."/>
            <person name="O'Neil J."/>
            <person name="Leadbetter J.R."/>
            <person name="Lee S.Y."/>
            <person name="Hur C.G."/>
            <person name="Spain J.C."/>
            <person name="Ovchinnikova G."/>
            <person name="Goodwin L."/>
            <person name="Han C."/>
        </authorList>
    </citation>
    <scope>NUCLEOTIDE SEQUENCE [LARGE SCALE GENOMIC DNA]</scope>
    <source>
        <strain>S110</strain>
    </source>
</reference>
<evidence type="ECO:0000255" key="1">
    <source>
        <dbReference type="HAMAP-Rule" id="MF_00252"/>
    </source>
</evidence>
<evidence type="ECO:0000256" key="2">
    <source>
        <dbReference type="SAM" id="MobiDB-lite"/>
    </source>
</evidence>
<keyword id="KW-0030">Aminoacyl-tRNA synthetase</keyword>
<keyword id="KW-0067">ATP-binding</keyword>
<keyword id="KW-0963">Cytoplasm</keyword>
<keyword id="KW-0436">Ligase</keyword>
<keyword id="KW-0460">Magnesium</keyword>
<keyword id="KW-0479">Metal-binding</keyword>
<keyword id="KW-0547">Nucleotide-binding</keyword>
<keyword id="KW-0648">Protein biosynthesis</keyword>
<gene>
    <name evidence="1" type="primary">lysS</name>
    <name type="ordered locus">Vapar_1410</name>
</gene>
<accession>C5CSG3</accession>